<comment type="interaction">
    <interactant intactId="EBI-1045716">
        <id>O76014</id>
    </interactant>
    <interactant intactId="EBI-727098">
        <id>P21549</id>
        <label>AGXT</label>
    </interactant>
    <organismsDiffer>false</organismsDiffer>
    <experiments>3</experiments>
</comment>
<comment type="interaction">
    <interactant intactId="EBI-1045716">
        <id>O76014</id>
    </interactant>
    <interactant intactId="EBI-745213">
        <id>P29972</id>
        <label>AQP1</label>
    </interactant>
    <organismsDiffer>false</organismsDiffer>
    <experiments>3</experiments>
</comment>
<comment type="interaction">
    <interactant intactId="EBI-1045716">
        <id>O76014</id>
    </interactant>
    <interactant intactId="EBI-1050106">
        <id>O75934</id>
        <label>BCAS2</label>
    </interactant>
    <organismsDiffer>false</organismsDiffer>
    <experiments>3</experiments>
</comment>
<comment type="interaction">
    <interactant intactId="EBI-1045716">
        <id>O76014</id>
    </interactant>
    <interactant intactId="EBI-10229433">
        <id>Q13515</id>
        <label>BFSP2</label>
    </interactant>
    <organismsDiffer>false</organismsDiffer>
    <experiments>3</experiments>
</comment>
<comment type="interaction">
    <interactant intactId="EBI-1045716">
        <id>O76014</id>
    </interactant>
    <interactant intactId="EBI-10226774">
        <id>Q0VAL7</id>
        <label>C21orf58</label>
    </interactant>
    <organismsDiffer>false</organismsDiffer>
    <experiments>3</experiments>
</comment>
<comment type="interaction">
    <interactant intactId="EBI-1045716">
        <id>O76014</id>
    </interactant>
    <interactant intactId="EBI-10181422">
        <id>A0A1B0GWI1</id>
        <label>CCDC196</label>
    </interactant>
    <organismsDiffer>false</organismsDiffer>
    <experiments>3</experiments>
</comment>
<comment type="interaction">
    <interactant intactId="EBI-1045716">
        <id>O76014</id>
    </interactant>
    <interactant intactId="EBI-11980535">
        <id>P51800-3</id>
        <label>CLCNKA</label>
    </interactant>
    <organismsDiffer>false</organismsDiffer>
    <experiments>3</experiments>
</comment>
<comment type="interaction">
    <interactant intactId="EBI-1045716">
        <id>O76014</id>
    </interactant>
    <interactant intactId="EBI-747133">
        <id>P27658</id>
        <label>COL8A1</label>
    </interactant>
    <organismsDiffer>false</organismsDiffer>
    <experiments>3</experiments>
</comment>
<comment type="interaction">
    <interactant intactId="EBI-1045716">
        <id>O76014</id>
    </interactant>
    <interactant intactId="EBI-1055572">
        <id>P17661</id>
        <label>DES</label>
    </interactant>
    <organismsDiffer>false</organismsDiffer>
    <experiments>3</experiments>
</comment>
<comment type="interaction">
    <interactant intactId="EBI-1045716">
        <id>O76014</id>
    </interactant>
    <interactant intactId="EBI-1752811">
        <id>Q9BQ89</id>
        <label>FAM110A</label>
    </interactant>
    <organismsDiffer>false</organismsDiffer>
    <experiments>3</experiments>
</comment>
<comment type="interaction">
    <interactant intactId="EBI-1045716">
        <id>O76014</id>
    </interactant>
    <interactant intactId="EBI-741068">
        <id>Q969U6</id>
        <label>FBXW5</label>
    </interactant>
    <organismsDiffer>false</organismsDiffer>
    <experiments>3</experiments>
</comment>
<comment type="interaction">
    <interactant intactId="EBI-1045716">
        <id>O76014</id>
    </interactant>
    <interactant intactId="EBI-11427343">
        <id>Q9P2W3</id>
        <label>GNG13</label>
    </interactant>
    <organismsDiffer>false</organismsDiffer>
    <experiments>3</experiments>
</comment>
<comment type="interaction">
    <interactant intactId="EBI-1045716">
        <id>O76014</id>
    </interactant>
    <interactant intactId="EBI-11956675">
        <id>Q9GZV7</id>
        <label>HAPLN2</label>
    </interactant>
    <organismsDiffer>false</organismsDiffer>
    <experiments>3</experiments>
</comment>
<comment type="interaction">
    <interactant intactId="EBI-1045716">
        <id>O76014</id>
    </interactant>
    <interactant intactId="EBI-740220">
        <id>O14964</id>
        <label>HGS</label>
    </interactant>
    <organismsDiffer>false</organismsDiffer>
    <experiments>3</experiments>
</comment>
<comment type="interaction">
    <interactant intactId="EBI-1045716">
        <id>O76014</id>
    </interactant>
    <interactant intactId="EBI-740785">
        <id>P49639</id>
        <label>HOXA1</label>
    </interactant>
    <organismsDiffer>false</organismsDiffer>
    <experiments>3</experiments>
</comment>
<comment type="interaction">
    <interactant intactId="EBI-1045716">
        <id>O76014</id>
    </interactant>
    <interactant intactId="EBI-12056251">
        <id>Q9ULV5-2</id>
        <label>HSF4</label>
    </interactant>
    <organismsDiffer>false</organismsDiffer>
    <experiments>3</experiments>
</comment>
<comment type="interaction">
    <interactant intactId="EBI-1045716">
        <id>O76014</id>
    </interactant>
    <interactant intactId="EBI-298429">
        <id>P04264</id>
        <label>KRT1</label>
    </interactant>
    <organismsDiffer>false</organismsDiffer>
    <experiments>3</experiments>
</comment>
<comment type="interaction">
    <interactant intactId="EBI-1045716">
        <id>O76014</id>
    </interactant>
    <interactant intactId="EBI-2430095">
        <id>P12035</id>
        <label>KRT3</label>
    </interactant>
    <organismsDiffer>false</organismsDiffer>
    <experiments>3</experiments>
</comment>
<comment type="interaction">
    <interactant intactId="EBI-1045716">
        <id>O76014</id>
    </interactant>
    <interactant intactId="EBI-2371606">
        <id>P19013</id>
        <label>KRT4</label>
    </interactant>
    <organismsDiffer>false</organismsDiffer>
    <experiments>3</experiments>
</comment>
<comment type="interaction">
    <interactant intactId="EBI-1045716">
        <id>O76014</id>
    </interactant>
    <interactant intactId="EBI-740907">
        <id>P04259</id>
        <label>KRT6B</label>
    </interactant>
    <organismsDiffer>false</organismsDiffer>
    <experiments>3</experiments>
</comment>
<comment type="interaction">
    <interactant intactId="EBI-1045716">
        <id>O76014</id>
    </interactant>
    <interactant intactId="EBI-2564105">
        <id>P48668</id>
        <label>KRT6C</label>
    </interactant>
    <organismsDiffer>false</organismsDiffer>
    <experiments>3</experiments>
</comment>
<comment type="interaction">
    <interactant intactId="EBI-1045716">
        <id>O76014</id>
    </interactant>
    <interactant intactId="EBI-2952676">
        <id>Q3SY84</id>
        <label>KRT71</label>
    </interactant>
    <organismsDiffer>false</organismsDiffer>
    <experiments>3</experiments>
</comment>
<comment type="interaction">
    <interactant intactId="EBI-1045716">
        <id>O76014</id>
    </interactant>
    <interactant intactId="EBI-968660">
        <id>Q7RTS7</id>
        <label>KRT74</label>
    </interactant>
    <organismsDiffer>false</organismsDiffer>
    <experiments>7</experiments>
</comment>
<comment type="interaction">
    <interactant intactId="EBI-1045716">
        <id>O76014</id>
    </interactant>
    <interactant intactId="EBI-2949715">
        <id>O95678</id>
        <label>KRT75</label>
    </interactant>
    <organismsDiffer>false</organismsDiffer>
    <experiments>3</experiments>
</comment>
<comment type="interaction">
    <interactant intactId="EBI-1045716">
        <id>O76014</id>
    </interactant>
    <interactant intactId="EBI-2952745">
        <id>Q01546</id>
        <label>KRT76</label>
    </interactant>
    <organismsDiffer>false</organismsDiffer>
    <experiments>3</experiments>
</comment>
<comment type="interaction">
    <interactant intactId="EBI-1045716">
        <id>O76014</id>
    </interactant>
    <interactant intactId="EBI-739648">
        <id>Q14533</id>
        <label>KRT81</label>
    </interactant>
    <organismsDiffer>false</organismsDiffer>
    <experiments>5</experiments>
</comment>
<comment type="interaction">
    <interactant intactId="EBI-1045716">
        <id>O76014</id>
    </interactant>
    <interactant intactId="EBI-10221390">
        <id>P78385</id>
        <label>KRT83</label>
    </interactant>
    <organismsDiffer>false</organismsDiffer>
    <experiments>3</experiments>
</comment>
<comment type="interaction">
    <interactant intactId="EBI-1045716">
        <id>O76014</id>
    </interactant>
    <interactant intactId="EBI-1049371">
        <id>P78386</id>
        <label>KRT85</label>
    </interactant>
    <organismsDiffer>false</organismsDiffer>
    <experiments>5</experiments>
</comment>
<comment type="interaction">
    <interactant intactId="EBI-1045716">
        <id>O76014</id>
    </interactant>
    <interactant intactId="EBI-9996498">
        <id>O43790</id>
        <label>KRT86</label>
    </interactant>
    <organismsDiffer>false</organismsDiffer>
    <experiments>3</experiments>
</comment>
<comment type="interaction">
    <interactant intactId="EBI-1045716">
        <id>O76014</id>
    </interactant>
    <interactant intactId="EBI-2602570">
        <id>Q9BT17</id>
        <label>MTG1</label>
    </interactant>
    <organismsDiffer>false</organismsDiffer>
    <experiments>3</experiments>
</comment>
<comment type="interaction">
    <interactant intactId="EBI-1045716">
        <id>O76014</id>
    </interactant>
    <interactant intactId="EBI-1210753">
        <id>Q7Z417</id>
        <label>NUFIP2</label>
    </interactant>
    <organismsDiffer>false</organismsDiffer>
    <experiments>3</experiments>
</comment>
<comment type="interaction">
    <interactant intactId="EBI-1045716">
        <id>O76014</id>
    </interactant>
    <interactant intactId="EBI-536879">
        <id>O43482</id>
        <label>OIP5</label>
    </interactant>
    <organismsDiffer>false</organismsDiffer>
    <experiments>3</experiments>
</comment>
<comment type="interaction">
    <interactant intactId="EBI-1045716">
        <id>O76014</id>
    </interactant>
    <interactant intactId="EBI-740446">
        <id>P32242</id>
        <label>OTX1</label>
    </interactant>
    <organismsDiffer>false</organismsDiffer>
    <experiments>3</experiments>
</comment>
<comment type="interaction">
    <interactant intactId="EBI-1045716">
        <id>O76014</id>
    </interactant>
    <interactant intactId="EBI-714158">
        <id>Q13526</id>
        <label>PIN1</label>
    </interactant>
    <organismsDiffer>false</organismsDiffer>
    <experiments>3</experiments>
</comment>
<comment type="interaction">
    <interactant intactId="EBI-1045716">
        <id>O76014</id>
    </interactant>
    <interactant intactId="EBI-602382">
        <id>Q16512</id>
        <label>PKN1</label>
    </interactant>
    <organismsDiffer>false</organismsDiffer>
    <experiments>3</experiments>
</comment>
<comment type="interaction">
    <interactant intactId="EBI-1045716">
        <id>O76014</id>
    </interactant>
    <interactant intactId="EBI-359352">
        <id>P25786</id>
        <label>PSMA1</label>
    </interactant>
    <organismsDiffer>false</organismsDiffer>
    <experiments>3</experiments>
</comment>
<comment type="interaction">
    <interactant intactId="EBI-1045716">
        <id>O76014</id>
    </interactant>
    <interactant intactId="EBI-358489">
        <id>Q96GM5</id>
        <label>SMARCD1</label>
    </interactant>
    <organismsDiffer>false</organismsDiffer>
    <experiments>3</experiments>
</comment>
<comment type="interaction">
    <interactant intactId="EBI-1045716">
        <id>O76014</id>
    </interactant>
    <interactant intactId="EBI-455078">
        <id>Q969G3</id>
        <label>SMARCE1</label>
    </interactant>
    <organismsDiffer>false</organismsDiffer>
    <experiments>3</experiments>
</comment>
<comment type="interaction">
    <interactant intactId="EBI-1045716">
        <id>O76014</id>
    </interactant>
    <interactant intactId="EBI-12018146">
        <id>Q8IYX1</id>
        <label>TBC1D21</label>
    </interactant>
    <organismsDiffer>false</organismsDiffer>
    <experiments>3</experiments>
</comment>
<comment type="interaction">
    <interactant intactId="EBI-1045716">
        <id>O76014</id>
    </interactant>
    <interactant intactId="EBI-6116822">
        <id>Q8N3L3</id>
        <label>TXLNB</label>
    </interactant>
    <organismsDiffer>false</organismsDiffer>
    <experiments>3</experiments>
</comment>
<comment type="interaction">
    <interactant intactId="EBI-1045716">
        <id>O76014</id>
    </interactant>
    <interactant intactId="EBI-739895">
        <id>Q8N6Y0</id>
        <label>USHBP1</label>
    </interactant>
    <organismsDiffer>false</organismsDiffer>
    <experiments>3</experiments>
</comment>
<comment type="miscellaneous">
    <text>There are two types of hair/microfibrillar keratin, I (acidic) and II (neutral to basic).</text>
</comment>
<comment type="similarity">
    <text evidence="1">Belongs to the intermediate filament family.</text>
</comment>
<feature type="chain" id="PRO_0000063694" description="Keratin, type I cuticular Ha7">
    <location>
        <begin position="1"/>
        <end position="449"/>
    </location>
</feature>
<feature type="domain" description="IF rod" evidence="1">
    <location>
        <begin position="104"/>
        <end position="415"/>
    </location>
</feature>
<feature type="region of interest" description="Head">
    <location>
        <begin position="1"/>
        <end position="104"/>
    </location>
</feature>
<feature type="region of interest" description="Coil 1A">
    <location>
        <begin position="105"/>
        <end position="139"/>
    </location>
</feature>
<feature type="region of interest" description="Linker 1">
    <location>
        <begin position="140"/>
        <end position="150"/>
    </location>
</feature>
<feature type="region of interest" description="Coil 1B">
    <location>
        <begin position="151"/>
        <end position="251"/>
    </location>
</feature>
<feature type="region of interest" description="Linker 12">
    <location>
        <begin position="252"/>
        <end position="267"/>
    </location>
</feature>
<feature type="region of interest" description="Coil 2">
    <location>
        <begin position="268"/>
        <end position="411"/>
    </location>
</feature>
<feature type="region of interest" description="Tail">
    <location>
        <begin position="416"/>
        <end position="449"/>
    </location>
</feature>
<feature type="site" description="Stutter">
    <location>
        <position position="353"/>
    </location>
</feature>
<feature type="sequence variant" id="VAR_049795" description="In dbSNP:rs9910204.">
    <original>G</original>
    <variation>C</variation>
    <location>
        <position position="13"/>
    </location>
</feature>
<feature type="sequence variant" id="VAR_049796" description="In dbSNP:rs9916724.">
    <original>N</original>
    <variation>S</variation>
    <location>
        <position position="39"/>
    </location>
</feature>
<feature type="sequence variant" id="VAR_049797" description="In dbSNP:rs9916484.">
    <original>T</original>
    <variation>A</variation>
    <location>
        <position position="72"/>
    </location>
</feature>
<feature type="sequence variant" id="VAR_049798" description="In dbSNP:rs9916475.">
    <original>S</original>
    <variation>C</variation>
    <location>
        <position position="73"/>
    </location>
</feature>
<feature type="sequence variant" id="VAR_049799" description="In dbSNP:rs16966811.">
    <original>A</original>
    <variation>V</variation>
    <location>
        <position position="217"/>
    </location>
</feature>
<feature type="sequence variant" id="VAR_049800" description="In dbSNP:rs2071607.">
    <original>A</original>
    <variation>D</variation>
    <location>
        <position position="306"/>
    </location>
</feature>
<feature type="sequence variant" id="VAR_049801" description="In dbSNP:rs35371972.">
    <original>S</original>
    <variation>F</variation>
    <location>
        <position position="421"/>
    </location>
</feature>
<feature type="sequence variant" id="VAR_049802" description="In dbSNP:rs8071814.">
    <original>T</original>
    <variation>M</variation>
    <location>
        <position position="422"/>
    </location>
</feature>
<feature type="sequence variant" id="VAR_049803" description="In dbSNP:rs17737019.">
    <original>P</original>
    <variation>S</variation>
    <location>
        <position position="434"/>
    </location>
</feature>
<reference key="1">
    <citation type="journal article" date="1998" name="J. Biol. Chem.">
        <title>Characterization of a 190-kilobase pair domain of human type I hair keratin genes.</title>
        <authorList>
            <person name="Rogers M.A."/>
            <person name="Winter H."/>
            <person name="Wolf C."/>
            <person name="Heck M."/>
            <person name="Schweizer J."/>
        </authorList>
    </citation>
    <scope>NUCLEOTIDE SEQUENCE [GENOMIC DNA]</scope>
</reference>
<reference key="2">
    <citation type="submission" date="2003-02" db="EMBL/GenBank/DDBJ databases">
        <authorList>
            <person name="Schweizer J."/>
        </authorList>
    </citation>
    <scope>SEQUENCE REVISION</scope>
</reference>
<organism>
    <name type="scientific">Homo sapiens</name>
    <name type="common">Human</name>
    <dbReference type="NCBI Taxonomy" id="9606"/>
    <lineage>
        <taxon>Eukaryota</taxon>
        <taxon>Metazoa</taxon>
        <taxon>Chordata</taxon>
        <taxon>Craniata</taxon>
        <taxon>Vertebrata</taxon>
        <taxon>Euteleostomi</taxon>
        <taxon>Mammalia</taxon>
        <taxon>Eutheria</taxon>
        <taxon>Euarchontoglires</taxon>
        <taxon>Primates</taxon>
        <taxon>Haplorrhini</taxon>
        <taxon>Catarrhini</taxon>
        <taxon>Hominidae</taxon>
        <taxon>Homo</taxon>
    </lineage>
</organism>
<keyword id="KW-0175">Coiled coil</keyword>
<keyword id="KW-0403">Intermediate filament</keyword>
<keyword id="KW-0416">Keratin</keyword>
<keyword id="KW-1267">Proteomics identification</keyword>
<keyword id="KW-1185">Reference proteome</keyword>
<protein>
    <recommendedName>
        <fullName>Keratin, type I cuticular Ha7</fullName>
    </recommendedName>
    <alternativeName>
        <fullName>Hair keratin, type I Ha7</fullName>
    </alternativeName>
    <alternativeName>
        <fullName>Keratin-37</fullName>
        <shortName>K37</shortName>
    </alternativeName>
</protein>
<name>KRT37_HUMAN</name>
<dbReference type="EMBL" id="Y16793">
    <property type="protein sequence ID" value="CAA76389.3"/>
    <property type="molecule type" value="Genomic_DNA"/>
</dbReference>
<dbReference type="CCDS" id="CCDS32653.1"/>
<dbReference type="RefSeq" id="NP_003761.3">
    <property type="nucleotide sequence ID" value="NM_003770.4"/>
</dbReference>
<dbReference type="SMR" id="O76014"/>
<dbReference type="BioGRID" id="114235">
    <property type="interactions" value="117"/>
</dbReference>
<dbReference type="FunCoup" id="O76014">
    <property type="interactions" value="210"/>
</dbReference>
<dbReference type="IntAct" id="O76014">
    <property type="interactions" value="93"/>
</dbReference>
<dbReference type="STRING" id="9606.ENSP00000225550"/>
<dbReference type="GlyGen" id="O76014">
    <property type="glycosylation" value="1 site"/>
</dbReference>
<dbReference type="iPTMnet" id="O76014"/>
<dbReference type="PhosphoSitePlus" id="O76014"/>
<dbReference type="BioMuta" id="KRT37"/>
<dbReference type="jPOST" id="O76014"/>
<dbReference type="MassIVE" id="O76014"/>
<dbReference type="PaxDb" id="9606-ENSP00000225550"/>
<dbReference type="PeptideAtlas" id="O76014"/>
<dbReference type="ProteomicsDB" id="50346"/>
<dbReference type="Antibodypedia" id="28843">
    <property type="antibodies" value="32 antibodies from 15 providers"/>
</dbReference>
<dbReference type="DNASU" id="8688"/>
<dbReference type="Ensembl" id="ENST00000225550.4">
    <property type="protein sequence ID" value="ENSP00000225550.3"/>
    <property type="gene ID" value="ENSG00000108417.4"/>
</dbReference>
<dbReference type="Ensembl" id="ENST00000574588.1">
    <property type="protein sequence ID" value="ENSP00000458693.1"/>
    <property type="gene ID" value="ENSG00000263022.1"/>
</dbReference>
<dbReference type="Ensembl" id="ENST00000709596.1">
    <property type="protein sequence ID" value="ENSP00000517785.1"/>
    <property type="gene ID" value="ENSG00000292032.1"/>
</dbReference>
<dbReference type="GeneID" id="8688"/>
<dbReference type="KEGG" id="hsa:8688"/>
<dbReference type="MANE-Select" id="ENST00000225550.4">
    <property type="protein sequence ID" value="ENSP00000225550.3"/>
    <property type="RefSeq nucleotide sequence ID" value="NM_003770.5"/>
    <property type="RefSeq protein sequence ID" value="NP_003761.3"/>
</dbReference>
<dbReference type="UCSC" id="uc002hwp.2">
    <property type="organism name" value="human"/>
</dbReference>
<dbReference type="AGR" id="HGNC:6455"/>
<dbReference type="CTD" id="8688"/>
<dbReference type="DisGeNET" id="8688"/>
<dbReference type="GeneCards" id="KRT37"/>
<dbReference type="HGNC" id="HGNC:6455">
    <property type="gene designation" value="KRT37"/>
</dbReference>
<dbReference type="HPA" id="ENSG00000108417">
    <property type="expression patterns" value="Tissue enriched (skin)"/>
</dbReference>
<dbReference type="MIM" id="604541">
    <property type="type" value="gene"/>
</dbReference>
<dbReference type="neXtProt" id="NX_O76014"/>
<dbReference type="OpenTargets" id="ENSG00000108417"/>
<dbReference type="PharmGKB" id="PA30244"/>
<dbReference type="VEuPathDB" id="HostDB:ENSG00000108417"/>
<dbReference type="eggNOG" id="ENOG502SIYJ">
    <property type="taxonomic scope" value="Eukaryota"/>
</dbReference>
<dbReference type="GeneTree" id="ENSGT00940000163444"/>
<dbReference type="HOGENOM" id="CLU_012560_8_0_1"/>
<dbReference type="InParanoid" id="O76014"/>
<dbReference type="OMA" id="PCNGHEK"/>
<dbReference type="OrthoDB" id="9445296at2759"/>
<dbReference type="PAN-GO" id="O76014">
    <property type="GO annotations" value="3 GO annotations based on evolutionary models"/>
</dbReference>
<dbReference type="PhylomeDB" id="O76014"/>
<dbReference type="TreeFam" id="TF332742"/>
<dbReference type="PathwayCommons" id="O76014"/>
<dbReference type="Reactome" id="R-HSA-6805567">
    <property type="pathway name" value="Keratinization"/>
</dbReference>
<dbReference type="Reactome" id="R-HSA-6809371">
    <property type="pathway name" value="Formation of the cornified envelope"/>
</dbReference>
<dbReference type="SignaLink" id="O76014"/>
<dbReference type="BioGRID-ORCS" id="8688">
    <property type="hits" value="11 hits in 1143 CRISPR screens"/>
</dbReference>
<dbReference type="GenomeRNAi" id="8688"/>
<dbReference type="Pharos" id="O76014">
    <property type="development level" value="Tdark"/>
</dbReference>
<dbReference type="PRO" id="PR:O76014"/>
<dbReference type="Proteomes" id="UP000005640">
    <property type="component" value="Chromosome 17"/>
</dbReference>
<dbReference type="RNAct" id="O76014">
    <property type="molecule type" value="protein"/>
</dbReference>
<dbReference type="Bgee" id="ENSG00000108417">
    <property type="expression patterns" value="Expressed in primordial germ cell in gonad and 19 other cell types or tissues"/>
</dbReference>
<dbReference type="GO" id="GO:0005856">
    <property type="term" value="C:cytoskeleton"/>
    <property type="evidence" value="ECO:0000318"/>
    <property type="project" value="GO_Central"/>
</dbReference>
<dbReference type="GO" id="GO:0005829">
    <property type="term" value="C:cytosol"/>
    <property type="evidence" value="ECO:0000304"/>
    <property type="project" value="Reactome"/>
</dbReference>
<dbReference type="GO" id="GO:0070062">
    <property type="term" value="C:extracellular exosome"/>
    <property type="evidence" value="ECO:0007005"/>
    <property type="project" value="UniProtKB"/>
</dbReference>
<dbReference type="GO" id="GO:0005882">
    <property type="term" value="C:intermediate filament"/>
    <property type="evidence" value="ECO:0007669"/>
    <property type="project" value="UniProtKB-KW"/>
</dbReference>
<dbReference type="GO" id="GO:0005198">
    <property type="term" value="F:structural molecule activity"/>
    <property type="evidence" value="ECO:0000304"/>
    <property type="project" value="ProtInc"/>
</dbReference>
<dbReference type="GO" id="GO:0030855">
    <property type="term" value="P:epithelial cell differentiation"/>
    <property type="evidence" value="ECO:0000318"/>
    <property type="project" value="GO_Central"/>
</dbReference>
<dbReference type="GO" id="GO:0045109">
    <property type="term" value="P:intermediate filament organization"/>
    <property type="evidence" value="ECO:0000318"/>
    <property type="project" value="GO_Central"/>
</dbReference>
<dbReference type="FunFam" id="1.20.5.1160:FF:000002">
    <property type="entry name" value="Type I keratin 10"/>
    <property type="match status" value="1"/>
</dbReference>
<dbReference type="FunFam" id="1.20.5.170:FF:000002">
    <property type="entry name" value="Type I keratin KA11"/>
    <property type="match status" value="1"/>
</dbReference>
<dbReference type="FunFam" id="1.20.5.500:FF:000001">
    <property type="entry name" value="Type II keratin 23"/>
    <property type="match status" value="1"/>
</dbReference>
<dbReference type="Gene3D" id="1.20.5.170">
    <property type="match status" value="1"/>
</dbReference>
<dbReference type="Gene3D" id="1.20.5.500">
    <property type="entry name" value="Single helix bin"/>
    <property type="match status" value="1"/>
</dbReference>
<dbReference type="Gene3D" id="1.20.5.1160">
    <property type="entry name" value="Vasodilator-stimulated phosphoprotein"/>
    <property type="match status" value="1"/>
</dbReference>
<dbReference type="InterPro" id="IPR018039">
    <property type="entry name" value="IF_conserved"/>
</dbReference>
<dbReference type="InterPro" id="IPR039008">
    <property type="entry name" value="IF_rod_dom"/>
</dbReference>
<dbReference type="InterPro" id="IPR002957">
    <property type="entry name" value="Keratin_I"/>
</dbReference>
<dbReference type="PANTHER" id="PTHR23239">
    <property type="entry name" value="INTERMEDIATE FILAMENT"/>
    <property type="match status" value="1"/>
</dbReference>
<dbReference type="PANTHER" id="PTHR23239:SF110">
    <property type="entry name" value="KERATIN, TYPE I CUTICULAR HA7"/>
    <property type="match status" value="1"/>
</dbReference>
<dbReference type="Pfam" id="PF00038">
    <property type="entry name" value="Filament"/>
    <property type="match status" value="1"/>
</dbReference>
<dbReference type="PRINTS" id="PR01248">
    <property type="entry name" value="TYPE1KERATIN"/>
</dbReference>
<dbReference type="SMART" id="SM01391">
    <property type="entry name" value="Filament"/>
    <property type="match status" value="1"/>
</dbReference>
<dbReference type="SUPFAM" id="SSF64593">
    <property type="entry name" value="Intermediate filament protein, coiled coil region"/>
    <property type="match status" value="2"/>
</dbReference>
<dbReference type="PROSITE" id="PS00226">
    <property type="entry name" value="IF_ROD_1"/>
    <property type="match status" value="1"/>
</dbReference>
<dbReference type="PROSITE" id="PS51842">
    <property type="entry name" value="IF_ROD_2"/>
    <property type="match status" value="1"/>
</dbReference>
<evidence type="ECO:0000255" key="1">
    <source>
        <dbReference type="PROSITE-ProRule" id="PRU01188"/>
    </source>
</evidence>
<sequence>MTSFYSTSSCPLGCTMAPGARNVFVSPIDVGCQPVAEANAASMCLLANVAHANRVRVGSTPLGRPSLCLPPTSHTACPLPGTCHIPGNIGICGAYGKNTLNGHEKETMKFLNDRLANYLEKVRQLEQENAELETTLLERSKCHESTVCPDYQSYFRTIEELQQKILCSKAENARLIVQIDNAKLAADDFRIKLESERSLHQLVEADKCGTQKLLDDATLAKADLEAQQESLKEEQLSLKSNHEQEVKILRSQLGEKFRIELDIEPTIDLNRVLGEMRAQYEAMVETNHQDVEQWFQAQSEGISLQAMSCSEELQCCQSEILELRCTVNALEVERQAQHTLKDCLQNSLCEAEDRYGTELAQMQSLISNLEEQLSEIRADLERQNQEYQVLLDVKARLENEIATYRNLLESEDCKLPCNPCSTPASCTSCPSCGPVTGGSPSGHGASMGR</sequence>
<proteinExistence type="evidence at protein level"/>
<accession>O76014</accession>
<gene>
    <name type="primary">KRT37</name>
    <name type="synonym">HHA7</name>
    <name type="synonym">HKA7</name>
    <name type="synonym">KRTHA7</name>
</gene>